<name>AROK_SHEON</name>
<feature type="chain" id="PRO_0000192408" description="Shikimate kinase">
    <location>
        <begin position="1"/>
        <end position="171"/>
    </location>
</feature>
<feature type="binding site" evidence="1">
    <location>
        <begin position="14"/>
        <end position="19"/>
    </location>
    <ligand>
        <name>ATP</name>
        <dbReference type="ChEBI" id="CHEBI:30616"/>
    </ligand>
</feature>
<feature type="binding site" evidence="1">
    <location>
        <position position="18"/>
    </location>
    <ligand>
        <name>Mg(2+)</name>
        <dbReference type="ChEBI" id="CHEBI:18420"/>
    </ligand>
</feature>
<feature type="binding site" evidence="1">
    <location>
        <position position="36"/>
    </location>
    <ligand>
        <name>substrate</name>
    </ligand>
</feature>
<feature type="binding site" evidence="1">
    <location>
        <position position="60"/>
    </location>
    <ligand>
        <name>substrate</name>
    </ligand>
</feature>
<feature type="binding site" evidence="1">
    <location>
        <position position="82"/>
    </location>
    <ligand>
        <name>substrate</name>
    </ligand>
</feature>
<feature type="binding site" evidence="1">
    <location>
        <position position="120"/>
    </location>
    <ligand>
        <name>ATP</name>
        <dbReference type="ChEBI" id="CHEBI:30616"/>
    </ligand>
</feature>
<feature type="binding site" evidence="1">
    <location>
        <position position="139"/>
    </location>
    <ligand>
        <name>substrate</name>
    </ligand>
</feature>
<feature type="binding site" evidence="1">
    <location>
        <position position="156"/>
    </location>
    <ligand>
        <name>ATP</name>
        <dbReference type="ChEBI" id="CHEBI:30616"/>
    </ligand>
</feature>
<gene>
    <name evidence="1" type="primary">aroK</name>
    <name type="ordered locus">SO_0286</name>
</gene>
<proteinExistence type="inferred from homology"/>
<organism>
    <name type="scientific">Shewanella oneidensis (strain ATCC 700550 / JCM 31522 / CIP 106686 / LMG 19005 / NCIMB 14063 / MR-1)</name>
    <dbReference type="NCBI Taxonomy" id="211586"/>
    <lineage>
        <taxon>Bacteria</taxon>
        <taxon>Pseudomonadati</taxon>
        <taxon>Pseudomonadota</taxon>
        <taxon>Gammaproteobacteria</taxon>
        <taxon>Alteromonadales</taxon>
        <taxon>Shewanellaceae</taxon>
        <taxon>Shewanella</taxon>
    </lineage>
</organism>
<keyword id="KW-0028">Amino-acid biosynthesis</keyword>
<keyword id="KW-0057">Aromatic amino acid biosynthesis</keyword>
<keyword id="KW-0067">ATP-binding</keyword>
<keyword id="KW-0963">Cytoplasm</keyword>
<keyword id="KW-0418">Kinase</keyword>
<keyword id="KW-0460">Magnesium</keyword>
<keyword id="KW-0479">Metal-binding</keyword>
<keyword id="KW-0547">Nucleotide-binding</keyword>
<keyword id="KW-1185">Reference proteome</keyword>
<keyword id="KW-0808">Transferase</keyword>
<comment type="function">
    <text evidence="1">Catalyzes the specific phosphorylation of the 3-hydroxyl group of shikimic acid using ATP as a cosubstrate.</text>
</comment>
<comment type="catalytic activity">
    <reaction evidence="1">
        <text>shikimate + ATP = 3-phosphoshikimate + ADP + H(+)</text>
        <dbReference type="Rhea" id="RHEA:13121"/>
        <dbReference type="ChEBI" id="CHEBI:15378"/>
        <dbReference type="ChEBI" id="CHEBI:30616"/>
        <dbReference type="ChEBI" id="CHEBI:36208"/>
        <dbReference type="ChEBI" id="CHEBI:145989"/>
        <dbReference type="ChEBI" id="CHEBI:456216"/>
        <dbReference type="EC" id="2.7.1.71"/>
    </reaction>
</comment>
<comment type="cofactor">
    <cofactor evidence="1">
        <name>Mg(2+)</name>
        <dbReference type="ChEBI" id="CHEBI:18420"/>
    </cofactor>
    <text evidence="1">Binds 1 Mg(2+) ion per subunit.</text>
</comment>
<comment type="pathway">
    <text evidence="1">Metabolic intermediate biosynthesis; chorismate biosynthesis; chorismate from D-erythrose 4-phosphate and phosphoenolpyruvate: step 5/7.</text>
</comment>
<comment type="subunit">
    <text evidence="1">Monomer.</text>
</comment>
<comment type="subcellular location">
    <subcellularLocation>
        <location evidence="1">Cytoplasm</location>
    </subcellularLocation>
</comment>
<comment type="similarity">
    <text evidence="1">Belongs to the shikimate kinase family.</text>
</comment>
<protein>
    <recommendedName>
        <fullName evidence="1">Shikimate kinase</fullName>
        <shortName evidence="1">SK</shortName>
        <ecNumber evidence="1">2.7.1.71</ecNumber>
    </recommendedName>
</protein>
<reference key="1">
    <citation type="journal article" date="2002" name="Nat. Biotechnol.">
        <title>Genome sequence of the dissimilatory metal ion-reducing bacterium Shewanella oneidensis.</title>
        <authorList>
            <person name="Heidelberg J.F."/>
            <person name="Paulsen I.T."/>
            <person name="Nelson K.E."/>
            <person name="Gaidos E.J."/>
            <person name="Nelson W.C."/>
            <person name="Read T.D."/>
            <person name="Eisen J.A."/>
            <person name="Seshadri R."/>
            <person name="Ward N.L."/>
            <person name="Methe B.A."/>
            <person name="Clayton R.A."/>
            <person name="Meyer T."/>
            <person name="Tsapin A."/>
            <person name="Scott J."/>
            <person name="Beanan M.J."/>
            <person name="Brinkac L.M."/>
            <person name="Daugherty S.C."/>
            <person name="DeBoy R.T."/>
            <person name="Dodson R.J."/>
            <person name="Durkin A.S."/>
            <person name="Haft D.H."/>
            <person name="Kolonay J.F."/>
            <person name="Madupu R."/>
            <person name="Peterson J.D."/>
            <person name="Umayam L.A."/>
            <person name="White O."/>
            <person name="Wolf A.M."/>
            <person name="Vamathevan J.J."/>
            <person name="Weidman J.F."/>
            <person name="Impraim M."/>
            <person name="Lee K."/>
            <person name="Berry K.J."/>
            <person name="Lee C."/>
            <person name="Mueller J."/>
            <person name="Khouri H.M."/>
            <person name="Gill J."/>
            <person name="Utterback T.R."/>
            <person name="McDonald L.A."/>
            <person name="Feldblyum T.V."/>
            <person name="Smith H.O."/>
            <person name="Venter J.C."/>
            <person name="Nealson K.H."/>
            <person name="Fraser C.M."/>
        </authorList>
    </citation>
    <scope>NUCLEOTIDE SEQUENCE [LARGE SCALE GENOMIC DNA]</scope>
    <source>
        <strain>ATCC 700550 / JCM 31522 / CIP 106686 / LMG 19005 / NCIMB 14063 / MR-1</strain>
    </source>
</reference>
<accession>Q8EK20</accession>
<sequence>MAEKRNIFLVGPMGAGKSTIGRHLAQMLHLEFHDSDQEIEQRTGADIAWVFDVEGEEGFRRREAQVIADLSEKQGIVLATGGGSVQSKDIRNHLSARGIVVYLETTIDKQVARTQRDKRRPLLQVDDPREVLESLAEIRNPLYEEIADVVVKTDDQSAKVVANQIIEKLGF</sequence>
<evidence type="ECO:0000255" key="1">
    <source>
        <dbReference type="HAMAP-Rule" id="MF_00109"/>
    </source>
</evidence>
<dbReference type="EC" id="2.7.1.71" evidence="1"/>
<dbReference type="EMBL" id="AE014299">
    <property type="protein sequence ID" value="AAN53371.1"/>
    <property type="molecule type" value="Genomic_DNA"/>
</dbReference>
<dbReference type="RefSeq" id="NP_715926.1">
    <property type="nucleotide sequence ID" value="NC_004347.2"/>
</dbReference>
<dbReference type="RefSeq" id="WP_011070658.1">
    <property type="nucleotide sequence ID" value="NZ_CP053946.1"/>
</dbReference>
<dbReference type="SMR" id="Q8EK20"/>
<dbReference type="STRING" id="211586.SO_0286"/>
<dbReference type="PaxDb" id="211586-SO_0286"/>
<dbReference type="KEGG" id="son:SO_0286"/>
<dbReference type="PATRIC" id="fig|211586.12.peg.278"/>
<dbReference type="eggNOG" id="COG0703">
    <property type="taxonomic scope" value="Bacteria"/>
</dbReference>
<dbReference type="HOGENOM" id="CLU_057607_2_2_6"/>
<dbReference type="OrthoDB" id="9800332at2"/>
<dbReference type="PhylomeDB" id="Q8EK20"/>
<dbReference type="BioCyc" id="SONE211586:G1GMP-276-MONOMER"/>
<dbReference type="UniPathway" id="UPA00053">
    <property type="reaction ID" value="UER00088"/>
</dbReference>
<dbReference type="Proteomes" id="UP000008186">
    <property type="component" value="Chromosome"/>
</dbReference>
<dbReference type="GO" id="GO:0005829">
    <property type="term" value="C:cytosol"/>
    <property type="evidence" value="ECO:0000318"/>
    <property type="project" value="GO_Central"/>
</dbReference>
<dbReference type="GO" id="GO:0005524">
    <property type="term" value="F:ATP binding"/>
    <property type="evidence" value="ECO:0007669"/>
    <property type="project" value="UniProtKB-UniRule"/>
</dbReference>
<dbReference type="GO" id="GO:0000287">
    <property type="term" value="F:magnesium ion binding"/>
    <property type="evidence" value="ECO:0007669"/>
    <property type="project" value="UniProtKB-UniRule"/>
</dbReference>
<dbReference type="GO" id="GO:0004765">
    <property type="term" value="F:shikimate kinase activity"/>
    <property type="evidence" value="ECO:0000318"/>
    <property type="project" value="GO_Central"/>
</dbReference>
<dbReference type="GO" id="GO:0008652">
    <property type="term" value="P:amino acid biosynthetic process"/>
    <property type="evidence" value="ECO:0007669"/>
    <property type="project" value="UniProtKB-KW"/>
</dbReference>
<dbReference type="GO" id="GO:0009073">
    <property type="term" value="P:aromatic amino acid family biosynthetic process"/>
    <property type="evidence" value="ECO:0007669"/>
    <property type="project" value="UniProtKB-KW"/>
</dbReference>
<dbReference type="GO" id="GO:0009423">
    <property type="term" value="P:chorismate biosynthetic process"/>
    <property type="evidence" value="ECO:0007669"/>
    <property type="project" value="UniProtKB-UniRule"/>
</dbReference>
<dbReference type="CDD" id="cd00464">
    <property type="entry name" value="SK"/>
    <property type="match status" value="1"/>
</dbReference>
<dbReference type="FunFam" id="3.40.50.300:FF:000099">
    <property type="entry name" value="Shikimate kinase 1"/>
    <property type="match status" value="1"/>
</dbReference>
<dbReference type="Gene3D" id="3.40.50.300">
    <property type="entry name" value="P-loop containing nucleotide triphosphate hydrolases"/>
    <property type="match status" value="1"/>
</dbReference>
<dbReference type="HAMAP" id="MF_00109">
    <property type="entry name" value="Shikimate_kinase"/>
    <property type="match status" value="1"/>
</dbReference>
<dbReference type="InterPro" id="IPR027417">
    <property type="entry name" value="P-loop_NTPase"/>
</dbReference>
<dbReference type="InterPro" id="IPR031322">
    <property type="entry name" value="Shikimate/glucono_kinase"/>
</dbReference>
<dbReference type="InterPro" id="IPR000623">
    <property type="entry name" value="Shikimate_kinase/TSH1"/>
</dbReference>
<dbReference type="InterPro" id="IPR023000">
    <property type="entry name" value="Shikimate_kinase_CS"/>
</dbReference>
<dbReference type="NCBIfam" id="NF003456">
    <property type="entry name" value="PRK05057.1"/>
    <property type="match status" value="1"/>
</dbReference>
<dbReference type="PANTHER" id="PTHR21087">
    <property type="entry name" value="SHIKIMATE KINASE"/>
    <property type="match status" value="1"/>
</dbReference>
<dbReference type="PANTHER" id="PTHR21087:SF16">
    <property type="entry name" value="SHIKIMATE KINASE 1, CHLOROPLASTIC"/>
    <property type="match status" value="1"/>
</dbReference>
<dbReference type="Pfam" id="PF01202">
    <property type="entry name" value="SKI"/>
    <property type="match status" value="1"/>
</dbReference>
<dbReference type="PRINTS" id="PR01100">
    <property type="entry name" value="SHIKIMTKNASE"/>
</dbReference>
<dbReference type="SUPFAM" id="SSF52540">
    <property type="entry name" value="P-loop containing nucleoside triphosphate hydrolases"/>
    <property type="match status" value="1"/>
</dbReference>
<dbReference type="PROSITE" id="PS01128">
    <property type="entry name" value="SHIKIMATE_KINASE"/>
    <property type="match status" value="1"/>
</dbReference>